<comment type="function">
    <text evidence="1 4">Transcription factor that acts redundantly with NAC20 to regulate the expression of genes involved in the biosynthesis of starch and storage proteins in grain. Directly binds to the promoters of starch synthase 1 (SS1), pullulanase (PUL), glutelin A1 (GLUA1), glutelins B4 and B5 (GLUB4 and GLUB5), alpha-globulin and 16 kDa prolamin, and activates their expression (By similarity). Possesses transactivation activity in yeast (PubMed:27872632).</text>
</comment>
<comment type="subunit">
    <text evidence="4 5">Forms homodimers (PubMed:32989010). Forms heterodimers with NAC20 (PubMed:27872632, PubMed:32989010). Forms heterodimers with NAC23 (PubMed:27872632).</text>
</comment>
<comment type="subcellular location">
    <subcellularLocation>
        <location evidence="2 4 5">Nucleus</location>
    </subcellularLocation>
</comment>
<comment type="tissue specificity">
    <text evidence="4">Expressed in developing seeds.</text>
</comment>
<comment type="domain">
    <text evidence="2">The NAC domain includes a DNA binding domain and a dimerization domain.</text>
</comment>
<sequence length="333" mass="37383">MGEQQQQVERQPDLPPGFRFHPTDEEIITFYLAPKVVDSRGFCVAAIGEVDLNKCEPWDLPGKAKMNGEKEWYFYCQKDRKYPTGMRTNRATEAGYWKATGKDKEIFRNHHMLIGMKKTLVFYKGRAPKGDKTNWVMHEYRLADASPPQPPPPPSSAEPPRQDDWAVCRIFHKSSGIKKPVQVPMQMPMQMQMPVAHQVPAANYQQQMAMASASIIQVPMQMQMPSMSDQLQMLDDFSTGSLMAPPPPPPSYSTLPGFPLQINGGAQQFVGNPSMYYQQQQQQQQQQMDMAAGGFVVSEPSSLVVSPQDAADQNNAADISSVACNMDATIWKY</sequence>
<reference key="1">
    <citation type="journal article" date="2016" name="Front. Plant Sci.">
        <title>Three rice NAC transcription factors heteromerize and are associated with seed size.</title>
        <authorList>
            <person name="Mathew I.E."/>
            <person name="Das S."/>
            <person name="Mahto A."/>
            <person name="Agarwal P."/>
        </authorList>
    </citation>
    <scope>NUCLEOTIDE SEQUENCE [MRNA]</scope>
    <scope>FUNCTION</scope>
    <scope>INTERACTION WITH NAC20 AND NAC23</scope>
    <scope>SUBCELLULAR LOCATION</scope>
    <scope>TISSUE SPECIFICITY</scope>
</reference>
<reference key="2">
    <citation type="journal article" date="2005" name="PLoS Biol.">
        <title>The genomes of Oryza sativa: a history of duplications.</title>
        <authorList>
            <person name="Yu J."/>
            <person name="Wang J."/>
            <person name="Lin W."/>
            <person name="Li S."/>
            <person name="Li H."/>
            <person name="Zhou J."/>
            <person name="Ni P."/>
            <person name="Dong W."/>
            <person name="Hu S."/>
            <person name="Zeng C."/>
            <person name="Zhang J."/>
            <person name="Zhang Y."/>
            <person name="Li R."/>
            <person name="Xu Z."/>
            <person name="Li S."/>
            <person name="Li X."/>
            <person name="Zheng H."/>
            <person name="Cong L."/>
            <person name="Lin L."/>
            <person name="Yin J."/>
            <person name="Geng J."/>
            <person name="Li G."/>
            <person name="Shi J."/>
            <person name="Liu J."/>
            <person name="Lv H."/>
            <person name="Li J."/>
            <person name="Wang J."/>
            <person name="Deng Y."/>
            <person name="Ran L."/>
            <person name="Shi X."/>
            <person name="Wang X."/>
            <person name="Wu Q."/>
            <person name="Li C."/>
            <person name="Ren X."/>
            <person name="Wang J."/>
            <person name="Wang X."/>
            <person name="Li D."/>
            <person name="Liu D."/>
            <person name="Zhang X."/>
            <person name="Ji Z."/>
            <person name="Zhao W."/>
            <person name="Sun Y."/>
            <person name="Zhang Z."/>
            <person name="Bao J."/>
            <person name="Han Y."/>
            <person name="Dong L."/>
            <person name="Ji J."/>
            <person name="Chen P."/>
            <person name="Wu S."/>
            <person name="Liu J."/>
            <person name="Xiao Y."/>
            <person name="Bu D."/>
            <person name="Tan J."/>
            <person name="Yang L."/>
            <person name="Ye C."/>
            <person name="Zhang J."/>
            <person name="Xu J."/>
            <person name="Zhou Y."/>
            <person name="Yu Y."/>
            <person name="Zhang B."/>
            <person name="Zhuang S."/>
            <person name="Wei H."/>
            <person name="Liu B."/>
            <person name="Lei M."/>
            <person name="Yu H."/>
            <person name="Li Y."/>
            <person name="Xu H."/>
            <person name="Wei S."/>
            <person name="He X."/>
            <person name="Fang L."/>
            <person name="Zhang Z."/>
            <person name="Zhang Y."/>
            <person name="Huang X."/>
            <person name="Su Z."/>
            <person name="Tong W."/>
            <person name="Li J."/>
            <person name="Tong Z."/>
            <person name="Li S."/>
            <person name="Ye J."/>
            <person name="Wang L."/>
            <person name="Fang L."/>
            <person name="Lei T."/>
            <person name="Chen C.-S."/>
            <person name="Chen H.-C."/>
            <person name="Xu Z."/>
            <person name="Li H."/>
            <person name="Huang H."/>
            <person name="Zhang F."/>
            <person name="Xu H."/>
            <person name="Li N."/>
            <person name="Zhao C."/>
            <person name="Li S."/>
            <person name="Dong L."/>
            <person name="Huang Y."/>
            <person name="Li L."/>
            <person name="Xi Y."/>
            <person name="Qi Q."/>
            <person name="Li W."/>
            <person name="Zhang B."/>
            <person name="Hu W."/>
            <person name="Zhang Y."/>
            <person name="Tian X."/>
            <person name="Jiao Y."/>
            <person name="Liang X."/>
            <person name="Jin J."/>
            <person name="Gao L."/>
            <person name="Zheng W."/>
            <person name="Hao B."/>
            <person name="Liu S.-M."/>
            <person name="Wang W."/>
            <person name="Yuan L."/>
            <person name="Cao M."/>
            <person name="McDermott J."/>
            <person name="Samudrala R."/>
            <person name="Wang J."/>
            <person name="Wong G.K.-S."/>
            <person name="Yang H."/>
        </authorList>
    </citation>
    <scope>NUCLEOTIDE SEQUENCE [LARGE SCALE GENOMIC DNA]</scope>
    <source>
        <strain>cv. 93-11</strain>
    </source>
</reference>
<reference key="3">
    <citation type="journal article" date="2020" name="Plant Physiol.">
        <title>The NAC transcription factors OsNAC20 and OsNAC26 regulate starch and storage protein synthesis.</title>
        <authorList>
            <person name="Wang J."/>
            <person name="Chen Z."/>
            <person name="Zhang Q."/>
            <person name="Meng S."/>
            <person name="Wei C."/>
        </authorList>
    </citation>
    <scope>INTERACTION WITH NAC20</scope>
    <scope>SUBCELLULAR LOCATION</scope>
</reference>
<keyword id="KW-0238">DNA-binding</keyword>
<keyword id="KW-0539">Nucleus</keyword>
<keyword id="KW-1185">Reference proteome</keyword>
<keyword id="KW-0804">Transcription</keyword>
<keyword id="KW-0805">Transcription regulation</keyword>
<gene>
    <name evidence="6" type="primary">NAC26</name>
    <name evidence="8" type="synonym">DLN11</name>
    <name evidence="9" type="ORF">OsI_02070</name>
</gene>
<protein>
    <recommendedName>
        <fullName evidence="6">NAC domain-containing protein 26</fullName>
        <shortName evidence="6">ONAC026</shortName>
        <shortName evidence="7">OsNAC26</shortName>
    </recommendedName>
</protein>
<dbReference type="EMBL" id="KX953278">
    <property type="protein sequence ID" value="APH07726.1"/>
    <property type="molecule type" value="mRNA"/>
</dbReference>
<dbReference type="EMBL" id="CM000126">
    <property type="protein sequence ID" value="EAY74190.1"/>
    <property type="molecule type" value="Genomic_DNA"/>
</dbReference>
<dbReference type="SMR" id="A2WQE4"/>
<dbReference type="STRING" id="39946.A2WQE4"/>
<dbReference type="EnsemblPlants" id="BGIOSGA001578-TA">
    <property type="protein sequence ID" value="BGIOSGA001578-PA"/>
    <property type="gene ID" value="BGIOSGA001578"/>
</dbReference>
<dbReference type="EnsemblPlants" id="OsLima_01g0017530.01">
    <property type="protein sequence ID" value="OsLima_01g0017530.01"/>
    <property type="gene ID" value="OsLima_01g0017530"/>
</dbReference>
<dbReference type="EnsemblPlants" id="OsLiXu_01g0017480.01">
    <property type="protein sequence ID" value="OsLiXu_01g0017480.01"/>
    <property type="gene ID" value="OsLiXu_01g0017480"/>
</dbReference>
<dbReference type="EnsemblPlants" id="OsPr106_01g0017530.01">
    <property type="protein sequence ID" value="OsPr106_01g0017530.01"/>
    <property type="gene ID" value="OsPr106_01g0017530"/>
</dbReference>
<dbReference type="EnsemblPlants" id="OsZS97_01G017410_01">
    <property type="protein sequence ID" value="OsZS97_01G017410_01"/>
    <property type="gene ID" value="OsZS97_01G017410"/>
</dbReference>
<dbReference type="Gramene" id="BGIOSGA001578-TA">
    <property type="protein sequence ID" value="BGIOSGA001578-PA"/>
    <property type="gene ID" value="BGIOSGA001578"/>
</dbReference>
<dbReference type="Gramene" id="OsLima_01g0017530.01">
    <property type="protein sequence ID" value="OsLima_01g0017530.01"/>
    <property type="gene ID" value="OsLima_01g0017530"/>
</dbReference>
<dbReference type="Gramene" id="OsLiXu_01g0017480.01">
    <property type="protein sequence ID" value="OsLiXu_01g0017480.01"/>
    <property type="gene ID" value="OsLiXu_01g0017480"/>
</dbReference>
<dbReference type="Gramene" id="OsPr106_01g0017530.01">
    <property type="protein sequence ID" value="OsPr106_01g0017530.01"/>
    <property type="gene ID" value="OsPr106_01g0017530"/>
</dbReference>
<dbReference type="Gramene" id="OsZS97_01G017410_01">
    <property type="protein sequence ID" value="OsZS97_01G017410_01"/>
    <property type="gene ID" value="OsZS97_01G017410"/>
</dbReference>
<dbReference type="HOGENOM" id="CLU_035664_6_0_1"/>
<dbReference type="OMA" id="ECHPRSE"/>
<dbReference type="Proteomes" id="UP000007015">
    <property type="component" value="Chromosome 1"/>
</dbReference>
<dbReference type="GO" id="GO:0005634">
    <property type="term" value="C:nucleus"/>
    <property type="evidence" value="ECO:0000314"/>
    <property type="project" value="UniProtKB"/>
</dbReference>
<dbReference type="GO" id="GO:0003677">
    <property type="term" value="F:DNA binding"/>
    <property type="evidence" value="ECO:0007669"/>
    <property type="project" value="UniProtKB-KW"/>
</dbReference>
<dbReference type="GO" id="GO:0042803">
    <property type="term" value="F:protein homodimerization activity"/>
    <property type="evidence" value="ECO:0000314"/>
    <property type="project" value="UniProtKB"/>
</dbReference>
<dbReference type="GO" id="GO:0006355">
    <property type="term" value="P:regulation of DNA-templated transcription"/>
    <property type="evidence" value="ECO:0000314"/>
    <property type="project" value="UniProtKB"/>
</dbReference>
<dbReference type="FunFam" id="2.170.150.80:FF:000006">
    <property type="entry name" value="NAC domain-containing protein 100-like"/>
    <property type="match status" value="1"/>
</dbReference>
<dbReference type="Gene3D" id="2.170.150.80">
    <property type="entry name" value="NAC domain"/>
    <property type="match status" value="1"/>
</dbReference>
<dbReference type="InterPro" id="IPR003441">
    <property type="entry name" value="NAC-dom"/>
</dbReference>
<dbReference type="InterPro" id="IPR036093">
    <property type="entry name" value="NAC_dom_sf"/>
</dbReference>
<dbReference type="PANTHER" id="PTHR31744:SF92">
    <property type="entry name" value="NAC DOMAIN-CONTAINING PROTEIN 87"/>
    <property type="match status" value="1"/>
</dbReference>
<dbReference type="PANTHER" id="PTHR31744">
    <property type="entry name" value="PROTEIN CUP-SHAPED COTYLEDON 2-RELATED"/>
    <property type="match status" value="1"/>
</dbReference>
<dbReference type="Pfam" id="PF02365">
    <property type="entry name" value="NAM"/>
    <property type="match status" value="1"/>
</dbReference>
<dbReference type="SUPFAM" id="SSF101941">
    <property type="entry name" value="NAC domain"/>
    <property type="match status" value="1"/>
</dbReference>
<dbReference type="PROSITE" id="PS51005">
    <property type="entry name" value="NAC"/>
    <property type="match status" value="1"/>
</dbReference>
<evidence type="ECO:0000250" key="1">
    <source>
        <dbReference type="UniProtKB" id="Q9FTY0"/>
    </source>
</evidence>
<evidence type="ECO:0000255" key="2">
    <source>
        <dbReference type="PROSITE-ProRule" id="PRU00353"/>
    </source>
</evidence>
<evidence type="ECO:0000256" key="3">
    <source>
        <dbReference type="SAM" id="MobiDB-lite"/>
    </source>
</evidence>
<evidence type="ECO:0000269" key="4">
    <source>
    </source>
</evidence>
<evidence type="ECO:0000269" key="5">
    <source>
    </source>
</evidence>
<evidence type="ECO:0000303" key="6">
    <source>
    </source>
</evidence>
<evidence type="ECO:0000303" key="7">
    <source>
    </source>
</evidence>
<evidence type="ECO:0000305" key="8"/>
<evidence type="ECO:0000312" key="9">
    <source>
        <dbReference type="EMBL" id="EAY74190.1"/>
    </source>
</evidence>
<organism>
    <name type="scientific">Oryza sativa subsp. indica</name>
    <name type="common">Rice</name>
    <dbReference type="NCBI Taxonomy" id="39946"/>
    <lineage>
        <taxon>Eukaryota</taxon>
        <taxon>Viridiplantae</taxon>
        <taxon>Streptophyta</taxon>
        <taxon>Embryophyta</taxon>
        <taxon>Tracheophyta</taxon>
        <taxon>Spermatophyta</taxon>
        <taxon>Magnoliopsida</taxon>
        <taxon>Liliopsida</taxon>
        <taxon>Poales</taxon>
        <taxon>Poaceae</taxon>
        <taxon>BOP clade</taxon>
        <taxon>Oryzoideae</taxon>
        <taxon>Oryzeae</taxon>
        <taxon>Oryzinae</taxon>
        <taxon>Oryza</taxon>
        <taxon>Oryza sativa</taxon>
    </lineage>
</organism>
<accession>A2WQE4</accession>
<name>NAC26_ORYSI</name>
<feature type="chain" id="PRO_0000452675" description="NAC domain-containing protein 26">
    <location>
        <begin position="1"/>
        <end position="333"/>
    </location>
</feature>
<feature type="domain" description="NAC" evidence="2">
    <location>
        <begin position="14"/>
        <end position="173"/>
    </location>
</feature>
<feature type="DNA-binding region" evidence="2">
    <location>
        <begin position="114"/>
        <end position="179"/>
    </location>
</feature>
<feature type="region of interest" description="Disordered" evidence="3">
    <location>
        <begin position="143"/>
        <end position="162"/>
    </location>
</feature>
<feature type="compositionally biased region" description="Pro residues" evidence="3">
    <location>
        <begin position="147"/>
        <end position="157"/>
    </location>
</feature>
<proteinExistence type="evidence at protein level"/>